<protein>
    <recommendedName>
        <fullName>G antigen 6</fullName>
        <shortName>GAGE-6</shortName>
    </recommendedName>
    <alternativeName>
        <fullName>Cancer/testis antigen 4.6</fullName>
        <shortName>CT4.6</shortName>
    </alternativeName>
</protein>
<name>GAGE6_HUMAN</name>
<comment type="tissue specificity">
    <text>Expressed in a variety of tumor tissues but not in normal tissues, except testis.</text>
</comment>
<comment type="miscellaneous">
    <text>This gene belongs to a family of genes organized in clustered repeats. They have a high degree of predicted sequence identity, but differ by scattered single nucleotide substitution. Their sequences contain either the antigenic peptide YYWPRPRRY or YRPRPRRY which is recognized by cytotoxic T-cells.</text>
</comment>
<comment type="similarity">
    <text evidence="2">Belongs to the GAGE family.</text>
</comment>
<comment type="caution">
    <text evidence="2">The first GAGE nomenclature was based on identified mRNA sequences, but the high identity of the GAGE members made impossible to separate products of paralogous genes from polymorph products. PubMed:18179644 presented a new GAGE gene nomenclature based on the identified genes and their products.</text>
</comment>
<gene>
    <name type="primary">GAGE6</name>
</gene>
<keyword id="KW-1185">Reference proteome</keyword>
<organism>
    <name type="scientific">Homo sapiens</name>
    <name type="common">Human</name>
    <dbReference type="NCBI Taxonomy" id="9606"/>
    <lineage>
        <taxon>Eukaryota</taxon>
        <taxon>Metazoa</taxon>
        <taxon>Chordata</taxon>
        <taxon>Craniata</taxon>
        <taxon>Vertebrata</taxon>
        <taxon>Euteleostomi</taxon>
        <taxon>Mammalia</taxon>
        <taxon>Eutheria</taxon>
        <taxon>Euarchontoglires</taxon>
        <taxon>Primates</taxon>
        <taxon>Haplorrhini</taxon>
        <taxon>Catarrhini</taxon>
        <taxon>Hominidae</taxon>
        <taxon>Homo</taxon>
    </lineage>
</organism>
<sequence>MSWRGRSTYYWPRPRRYVQPPEVIGPMRPEQFSDEVEPATPEEGEPATQRQDPAAAQEGEDEGASAGQGPKPEADSQEQGHPQTGCECEDGPDGQEVDPPNPEEVKTPEEGEKQSQC</sequence>
<reference key="1">
    <citation type="journal article" date="1995" name="J. Exp. Med.">
        <title>A new family of genes coding for an antigen recognized by autologous cytolytic T lymphocytes on a human melanoma.</title>
        <authorList>
            <person name="van den Eynde B."/>
            <person name="Peeters O."/>
            <person name="de Backer O."/>
            <person name="Gaugler B."/>
            <person name="Lucas S."/>
            <person name="Boon T."/>
        </authorList>
    </citation>
    <scope>NUCLEOTIDE SEQUENCE [MRNA]</scope>
    <source>
        <tissue>Melanoma</tissue>
    </source>
</reference>
<reference key="2">
    <citation type="journal article" date="1999" name="Cancer Res.">
        <title>Characterization of the GAGE genes that are expressed in various human cancers and in normal testis.</title>
        <authorList>
            <person name="De Backer O."/>
            <person name="Arden K.C."/>
            <person name="Boretti M."/>
            <person name="Vantomme V."/>
            <person name="De Smet C."/>
            <person name="Czekay S."/>
            <person name="Viars C.S."/>
            <person name="De Plaen E."/>
            <person name="Brasseur F."/>
            <person name="Chomez P."/>
            <person name="Van den Eynde B."/>
            <person name="Boon T."/>
            <person name="van der Bruggen P."/>
        </authorList>
    </citation>
    <scope>CHARACTERIZATION OF ANTIGENIC PEPTIDES</scope>
</reference>
<reference key="3">
    <citation type="journal article" date="2008" name="Tissue Antigens">
        <title>An overview of the GAGE cancer/testis antigen family with the inclusion of newly identified members.</title>
        <authorList>
            <person name="Gjerstorff M.F."/>
            <person name="Ditzel H.J."/>
        </authorList>
    </citation>
    <scope>GAGE FAMILY</scope>
</reference>
<proteinExistence type="evidence at protein level"/>
<feature type="chain" id="PRO_0000148344" description="G antigen 6">
    <location>
        <begin position="1"/>
        <end position="117"/>
    </location>
</feature>
<feature type="region of interest" description="Disordered" evidence="1">
    <location>
        <begin position="1"/>
        <end position="117"/>
    </location>
</feature>
<feature type="compositionally biased region" description="Acidic residues" evidence="1">
    <location>
        <begin position="32"/>
        <end position="45"/>
    </location>
</feature>
<feature type="compositionally biased region" description="Acidic residues" evidence="1">
    <location>
        <begin position="87"/>
        <end position="96"/>
    </location>
</feature>
<feature type="compositionally biased region" description="Basic and acidic residues" evidence="1">
    <location>
        <begin position="103"/>
        <end position="117"/>
    </location>
</feature>
<accession>Q13070</accession>
<dbReference type="EMBL" id="U19147">
    <property type="protein sequence ID" value="AAA82749.1"/>
    <property type="molecule type" value="mRNA"/>
</dbReference>
<dbReference type="RefSeq" id="NP_001467.1">
    <property type="nucleotide sequence ID" value="NM_001476.1"/>
</dbReference>
<dbReference type="BioGRID" id="108851">
    <property type="interactions" value="1"/>
</dbReference>
<dbReference type="iPTMnet" id="Q13070"/>
<dbReference type="PhosphoSitePlus" id="Q13070"/>
<dbReference type="BioMuta" id="HGNC:4103"/>
<dbReference type="jPOST" id="Q13070"/>
<dbReference type="MassIVE" id="Q13070"/>
<dbReference type="PeptideAtlas" id="Q13070"/>
<dbReference type="Pumba" id="Q13070"/>
<dbReference type="DNASU" id="2578"/>
<dbReference type="GeneID" id="2578"/>
<dbReference type="KEGG" id="hsa:2578"/>
<dbReference type="AGR" id="HGNC:4103"/>
<dbReference type="CTD" id="2578"/>
<dbReference type="DisGeNET" id="2578"/>
<dbReference type="GeneCards" id="GAGE6"/>
<dbReference type="HGNC" id="HGNC:4103">
    <property type="gene designation" value="GAGE6"/>
</dbReference>
<dbReference type="MIM" id="300599">
    <property type="type" value="gene"/>
</dbReference>
<dbReference type="neXtProt" id="NX_Q13070"/>
<dbReference type="PharmGKB" id="PA28518"/>
<dbReference type="InParanoid" id="Q13070"/>
<dbReference type="PAN-GO" id="Q13070">
    <property type="GO annotations" value="0 GO annotations based on evolutionary models"/>
</dbReference>
<dbReference type="PathwayCommons" id="Q13070"/>
<dbReference type="SignaLink" id="Q13070"/>
<dbReference type="BioGRID-ORCS" id="2578">
    <property type="hits" value="1 hit in 26 CRISPR screens"/>
</dbReference>
<dbReference type="GenomeRNAi" id="2578"/>
<dbReference type="Pharos" id="Q13070">
    <property type="development level" value="Tdark"/>
</dbReference>
<dbReference type="PRO" id="PR:Q13070"/>
<dbReference type="Proteomes" id="UP000005640">
    <property type="component" value="Unplaced"/>
</dbReference>
<dbReference type="RNAct" id="Q13070">
    <property type="molecule type" value="protein"/>
</dbReference>
<dbReference type="InterPro" id="IPR031320">
    <property type="entry name" value="GAGE"/>
</dbReference>
<dbReference type="InterPro" id="IPR008625">
    <property type="entry name" value="GAGE_fam"/>
</dbReference>
<dbReference type="PANTHER" id="PTHR14047:SF30">
    <property type="entry name" value="G ANTIGEN 1-RELATED"/>
    <property type="match status" value="1"/>
</dbReference>
<dbReference type="PANTHER" id="PTHR14047">
    <property type="entry name" value="P ANTIGEN FAMILY MEMBER 5-RELATED"/>
    <property type="match status" value="1"/>
</dbReference>
<dbReference type="Pfam" id="PF05831">
    <property type="entry name" value="GAGE"/>
    <property type="match status" value="1"/>
</dbReference>
<dbReference type="SMART" id="SM01379">
    <property type="entry name" value="GAGE"/>
    <property type="match status" value="1"/>
</dbReference>
<evidence type="ECO:0000256" key="1">
    <source>
        <dbReference type="SAM" id="MobiDB-lite"/>
    </source>
</evidence>
<evidence type="ECO:0000305" key="2"/>